<protein>
    <recommendedName>
        <fullName>Accessory cholera enterotoxin</fullName>
        <shortName>Ace</shortName>
    </recommendedName>
</protein>
<dbReference type="EMBL" id="Z22569">
    <property type="protein sequence ID" value="CAA80292.1"/>
    <property type="molecule type" value="Genomic_DNA"/>
</dbReference>
<dbReference type="EMBL" id="AF175708">
    <property type="protein sequence ID" value="AAD51357.1"/>
    <property type="molecule type" value="Genomic_DNA"/>
</dbReference>
<dbReference type="EMBL" id="AF220606">
    <property type="protein sequence ID" value="AAF29546.1"/>
    <property type="molecule type" value="Genomic_DNA"/>
</dbReference>
<dbReference type="EMBL" id="AE003852">
    <property type="protein sequence ID" value="AAF94616.1"/>
    <property type="status" value="ALT_INIT"/>
    <property type="molecule type" value="Genomic_DNA"/>
</dbReference>
<dbReference type="PIR" id="C82197">
    <property type="entry name" value="C82197"/>
</dbReference>
<dbReference type="PIR" id="S36030">
    <property type="entry name" value="S36030"/>
</dbReference>
<dbReference type="RefSeq" id="NP_231102.1">
    <property type="nucleotide sequence ID" value="NC_002505.1"/>
</dbReference>
<dbReference type="STRING" id="243277.VC_1459"/>
<dbReference type="DNASU" id="2613965"/>
<dbReference type="EnsemblBacteria" id="AAF94616">
    <property type="protein sequence ID" value="AAF94616"/>
    <property type="gene ID" value="VC_1459"/>
</dbReference>
<dbReference type="KEGG" id="vch:VC_1459"/>
<dbReference type="PATRIC" id="fig|243277.26.peg.1389"/>
<dbReference type="eggNOG" id="ENOG5031PSX">
    <property type="taxonomic scope" value="Bacteria"/>
</dbReference>
<dbReference type="HOGENOM" id="CLU_186216_0_0_6"/>
<dbReference type="PHI-base" id="PHI:706"/>
<dbReference type="Proteomes" id="UP000000584">
    <property type="component" value="Chromosome 1"/>
</dbReference>
<dbReference type="GO" id="GO:0005576">
    <property type="term" value="C:extracellular region"/>
    <property type="evidence" value="ECO:0007669"/>
    <property type="project" value="UniProtKB-SubCell"/>
</dbReference>
<dbReference type="GO" id="GO:0020002">
    <property type="term" value="C:host cell plasma membrane"/>
    <property type="evidence" value="ECO:0007669"/>
    <property type="project" value="UniProtKB-SubCell"/>
</dbReference>
<dbReference type="GO" id="GO:0016020">
    <property type="term" value="C:membrane"/>
    <property type="evidence" value="ECO:0007669"/>
    <property type="project" value="UniProtKB-KW"/>
</dbReference>
<dbReference type="GO" id="GO:0090729">
    <property type="term" value="F:toxin activity"/>
    <property type="evidence" value="ECO:0007669"/>
    <property type="project" value="UniProtKB-KW"/>
</dbReference>
<dbReference type="InterPro" id="IPR019670">
    <property type="entry name" value="DUF2523"/>
</dbReference>
<dbReference type="Pfam" id="PF10734">
    <property type="entry name" value="DUF2523"/>
    <property type="match status" value="1"/>
</dbReference>
<organism>
    <name type="scientific">Vibrio cholerae serotype O1 (strain ATCC 39315 / El Tor Inaba N16961)</name>
    <dbReference type="NCBI Taxonomy" id="243277"/>
    <lineage>
        <taxon>Bacteria</taxon>
        <taxon>Pseudomonadati</taxon>
        <taxon>Pseudomonadota</taxon>
        <taxon>Gammaproteobacteria</taxon>
        <taxon>Vibrionales</taxon>
        <taxon>Vibrionaceae</taxon>
        <taxon>Vibrio</taxon>
    </lineage>
</organism>
<feature type="chain" id="PRO_0000064435" description="Accessory cholera enterotoxin">
    <location>
        <begin position="1"/>
        <end position="96"/>
    </location>
</feature>
<feature type="transmembrane region" description="Helical" evidence="1">
    <location>
        <begin position="76"/>
        <end position="96"/>
    </location>
</feature>
<proteinExistence type="predicted"/>
<evidence type="ECO:0000255" key="1"/>
<evidence type="ECO:0000305" key="2"/>
<sequence>MLMMDTLYDWLIDGFTWLVIKLGIMWIESKIFVIQFFWEMSQKVIDMFTIYPLIQQAIDMLPPQYSGFLFFLGLDQALAIVLQALMTRFALRALNL</sequence>
<reference key="1">
    <citation type="journal article" date="1993" name="Proc. Natl. Acad. Sci. U.S.A.">
        <title>Accessory cholera enterotoxin (Ace), the third toxin of a Vibrio cholerae virulence cassette.</title>
        <authorList>
            <person name="Trucksis M."/>
            <person name="Galen J.E."/>
            <person name="Michalski J."/>
            <person name="Fasano A."/>
            <person name="Kaper J.B."/>
        </authorList>
    </citation>
    <scope>NUCLEOTIDE SEQUENCE [GENOMIC DNA]</scope>
    <source>
        <strain>ATCC 55056 / El Tor Ogawa E7946</strain>
    </source>
</reference>
<reference key="2">
    <citation type="journal article" date="1999" name="Misainmurhag Hoiji">
        <title>Cloning and nucleotide sequence analysis of the virulence gene cassette from Vibrio cholerae KNIH002 isolated in Korea.</title>
        <authorList>
            <person name="Shin H.J."/>
            <person name="Park Y.C."/>
            <person name="Kim Y.C."/>
        </authorList>
    </citation>
    <scope>NUCLEOTIDE SEQUENCE [GENOMIC DNA]</scope>
    <source>
        <strain>KNIH002</strain>
    </source>
</reference>
<reference key="3">
    <citation type="submission" date="2000-01" db="EMBL/GenBank/DDBJ databases">
        <authorList>
            <person name="Kan B."/>
            <person name="Liu Y.Q."/>
            <person name="Qi G.M."/>
            <person name="Gao S.Y."/>
        </authorList>
    </citation>
    <scope>NUCLEOTIDE SEQUENCE [GENOMIC DNA]</scope>
    <source>
        <strain>El Tor 86015 / Serotype O1</strain>
    </source>
</reference>
<reference key="4">
    <citation type="journal article" date="2000" name="Nature">
        <title>DNA sequence of both chromosomes of the cholera pathogen Vibrio cholerae.</title>
        <authorList>
            <person name="Heidelberg J.F."/>
            <person name="Eisen J.A."/>
            <person name="Nelson W.C."/>
            <person name="Clayton R.A."/>
            <person name="Gwinn M.L."/>
            <person name="Dodson R.J."/>
            <person name="Haft D.H."/>
            <person name="Hickey E.K."/>
            <person name="Peterson J.D."/>
            <person name="Umayam L.A."/>
            <person name="Gill S.R."/>
            <person name="Nelson K.E."/>
            <person name="Read T.D."/>
            <person name="Tettelin H."/>
            <person name="Richardson D.L."/>
            <person name="Ermolaeva M.D."/>
            <person name="Vamathevan J.J."/>
            <person name="Bass S."/>
            <person name="Qin H."/>
            <person name="Dragoi I."/>
            <person name="Sellers P."/>
            <person name="McDonald L.A."/>
            <person name="Utterback T.R."/>
            <person name="Fleischmann R.D."/>
            <person name="Nierman W.C."/>
            <person name="White O."/>
            <person name="Salzberg S.L."/>
            <person name="Smith H.O."/>
            <person name="Colwell R.R."/>
            <person name="Mekalanos J.J."/>
            <person name="Venter J.C."/>
            <person name="Fraser C.M."/>
        </authorList>
    </citation>
    <scope>NUCLEOTIDE SEQUENCE [LARGE SCALE GENOMIC DNA]</scope>
    <source>
        <strain>ATCC 39315 / El Tor Inaba N16961</strain>
    </source>
</reference>
<accession>P38441</accession>
<accession>Q9KS10</accession>
<comment type="function">
    <text>Increases short-circuit current in rabbit ileal tissue mounted in Ussing chambers, by increasing the potential difference. Cultures of V.cholerae containing the cloned ace gene cause fluid secretion in ligated rabbit ileal loops.</text>
</comment>
<comment type="subcellular location">
    <subcellularLocation>
        <location>Secreted</location>
    </subcellularLocation>
    <subcellularLocation>
        <location evidence="2">Host cell membrane</location>
    </subcellularLocation>
</comment>
<comment type="caution">
    <text evidence="2">It is uncertain whether Met-1, Met-3 or Met-4 is the initiator.</text>
</comment>
<comment type="sequence caution" evidence="2">
    <conflict type="erroneous initiation">
        <sequence resource="EMBL-CDS" id="AAF94616"/>
    </conflict>
</comment>
<gene>
    <name type="primary">ace</name>
    <name type="ordered locus">VC_1459</name>
</gene>
<name>ACE_VIBCH</name>
<keyword id="KW-0260">Enterotoxin</keyword>
<keyword id="KW-1032">Host cell membrane</keyword>
<keyword id="KW-1043">Host membrane</keyword>
<keyword id="KW-0472">Membrane</keyword>
<keyword id="KW-1185">Reference proteome</keyword>
<keyword id="KW-0964">Secreted</keyword>
<keyword id="KW-0800">Toxin</keyword>
<keyword id="KW-0812">Transmembrane</keyword>
<keyword id="KW-1133">Transmembrane helix</keyword>
<keyword id="KW-0843">Virulence</keyword>